<comment type="function">
    <text evidence="1">Mnh complex is a Na(+)/H(+) antiporter involved in Na(+) excretion.</text>
</comment>
<comment type="subunit">
    <text evidence="1">May form a heterooligomeric complex that consists of seven subunits: mnhA1, mnhB1, mnhC1, mnhD1, mnhE1, mnhF1 and mnhG1.</text>
</comment>
<comment type="subcellular location">
    <subcellularLocation>
        <location evidence="3">Cell membrane</location>
        <topology evidence="3">Multi-pass membrane protein</topology>
    </subcellularLocation>
</comment>
<comment type="similarity">
    <text evidence="3">Belongs to the CPA3 antiporters (TC 2.A.63) subunit C family.</text>
</comment>
<reference key="1">
    <citation type="submission" date="2007-05" db="EMBL/GenBank/DDBJ databases">
        <title>Complete sequence of chromosome of Staphylococcus aureus subsp. aureus JH9.</title>
        <authorList>
            <consortium name="US DOE Joint Genome Institute"/>
            <person name="Copeland A."/>
            <person name="Lucas S."/>
            <person name="Lapidus A."/>
            <person name="Barry K."/>
            <person name="Detter J.C."/>
            <person name="Glavina del Rio T."/>
            <person name="Hammon N."/>
            <person name="Israni S."/>
            <person name="Pitluck S."/>
            <person name="Chain P."/>
            <person name="Malfatti S."/>
            <person name="Shin M."/>
            <person name="Vergez L."/>
            <person name="Schmutz J."/>
            <person name="Larimer F."/>
            <person name="Land M."/>
            <person name="Hauser L."/>
            <person name="Kyrpides N."/>
            <person name="Kim E."/>
            <person name="Tomasz A."/>
            <person name="Richardson P."/>
        </authorList>
    </citation>
    <scope>NUCLEOTIDE SEQUENCE [LARGE SCALE GENOMIC DNA]</scope>
    <source>
        <strain>JH9</strain>
    </source>
</reference>
<protein>
    <recommendedName>
        <fullName>Na(+)/H(+) antiporter subunit C1</fullName>
    </recommendedName>
    <alternativeName>
        <fullName>Mnh complex subunit C1</fullName>
    </alternativeName>
</protein>
<name>MNHC1_STAA9</name>
<gene>
    <name type="primary">mnhC1</name>
    <name type="ordered locus">SaurJH9_0950</name>
</gene>
<evidence type="ECO:0000250" key="1"/>
<evidence type="ECO:0000255" key="2"/>
<evidence type="ECO:0000305" key="3"/>
<organism>
    <name type="scientific">Staphylococcus aureus (strain JH9)</name>
    <dbReference type="NCBI Taxonomy" id="359786"/>
    <lineage>
        <taxon>Bacteria</taxon>
        <taxon>Bacillati</taxon>
        <taxon>Bacillota</taxon>
        <taxon>Bacilli</taxon>
        <taxon>Bacillales</taxon>
        <taxon>Staphylococcaceae</taxon>
        <taxon>Staphylococcus</taxon>
    </lineage>
</organism>
<keyword id="KW-0050">Antiport</keyword>
<keyword id="KW-1003">Cell membrane</keyword>
<keyword id="KW-0375">Hydrogen ion transport</keyword>
<keyword id="KW-0406">Ion transport</keyword>
<keyword id="KW-0472">Membrane</keyword>
<keyword id="KW-0915">Sodium</keyword>
<keyword id="KW-0739">Sodium transport</keyword>
<keyword id="KW-0812">Transmembrane</keyword>
<keyword id="KW-1133">Transmembrane helix</keyword>
<keyword id="KW-0813">Transport</keyword>
<dbReference type="EMBL" id="CP000703">
    <property type="protein sequence ID" value="ABQ48751.1"/>
    <property type="molecule type" value="Genomic_DNA"/>
</dbReference>
<dbReference type="RefSeq" id="WP_000402803.1">
    <property type="nucleotide sequence ID" value="NC_009487.1"/>
</dbReference>
<dbReference type="SMR" id="A5IRC8"/>
<dbReference type="GeneID" id="98345271"/>
<dbReference type="KEGG" id="saj:SaurJH9_0950"/>
<dbReference type="HOGENOM" id="CLU_082058_3_1_9"/>
<dbReference type="GO" id="GO:0005886">
    <property type="term" value="C:plasma membrane"/>
    <property type="evidence" value="ECO:0007669"/>
    <property type="project" value="UniProtKB-SubCell"/>
</dbReference>
<dbReference type="GO" id="GO:0015297">
    <property type="term" value="F:antiporter activity"/>
    <property type="evidence" value="ECO:0007669"/>
    <property type="project" value="UniProtKB-KW"/>
</dbReference>
<dbReference type="GO" id="GO:0008324">
    <property type="term" value="F:monoatomic cation transmembrane transporter activity"/>
    <property type="evidence" value="ECO:0007669"/>
    <property type="project" value="InterPro"/>
</dbReference>
<dbReference type="GO" id="GO:1902600">
    <property type="term" value="P:proton transmembrane transport"/>
    <property type="evidence" value="ECO:0007669"/>
    <property type="project" value="UniProtKB-KW"/>
</dbReference>
<dbReference type="GO" id="GO:0006814">
    <property type="term" value="P:sodium ion transport"/>
    <property type="evidence" value="ECO:0007669"/>
    <property type="project" value="UniProtKB-KW"/>
</dbReference>
<dbReference type="Gene3D" id="1.10.287.3510">
    <property type="match status" value="1"/>
</dbReference>
<dbReference type="InterPro" id="IPR050601">
    <property type="entry name" value="CPA3_antiporter_subunitC"/>
</dbReference>
<dbReference type="InterPro" id="IPR006673">
    <property type="entry name" value="Mnh_C1_su"/>
</dbReference>
<dbReference type="InterPro" id="IPR039428">
    <property type="entry name" value="NUOK/Mnh_C1-like"/>
</dbReference>
<dbReference type="NCBIfam" id="TIGR00941">
    <property type="entry name" value="2a6301s03"/>
    <property type="match status" value="1"/>
</dbReference>
<dbReference type="NCBIfam" id="NF006372">
    <property type="entry name" value="PRK08600.1"/>
    <property type="match status" value="1"/>
</dbReference>
<dbReference type="NCBIfam" id="NF006573">
    <property type="entry name" value="PRK09094.1"/>
    <property type="match status" value="1"/>
</dbReference>
<dbReference type="NCBIfam" id="NF009303">
    <property type="entry name" value="PRK12660.1"/>
    <property type="match status" value="1"/>
</dbReference>
<dbReference type="PANTHER" id="PTHR34583">
    <property type="entry name" value="ANTIPORTER SUBUNIT MNHC2-RELATED"/>
    <property type="match status" value="1"/>
</dbReference>
<dbReference type="PANTHER" id="PTHR34583:SF2">
    <property type="entry name" value="ANTIPORTER SUBUNIT MNHC2-RELATED"/>
    <property type="match status" value="1"/>
</dbReference>
<dbReference type="Pfam" id="PF00420">
    <property type="entry name" value="Oxidored_q2"/>
    <property type="match status" value="1"/>
</dbReference>
<proteinExistence type="inferred from homology"/>
<sequence length="113" mass="12293">MEIIMIFVSGILTAISVYLVLSKSLIRIVMGTTLLTHAANLFLITMGGLKHGTVPIYEANVKSYVDPIPQALILTAIVIAFATTAFFLVLAFRTYKELGTDNVESMKGVPEDD</sequence>
<accession>A5IRC8</accession>
<feature type="chain" id="PRO_0000372119" description="Na(+)/H(+) antiporter subunit C1">
    <location>
        <begin position="1"/>
        <end position="113"/>
    </location>
</feature>
<feature type="transmembrane region" description="Helical" evidence="2">
    <location>
        <begin position="1"/>
        <end position="21"/>
    </location>
</feature>
<feature type="transmembrane region" description="Helical" evidence="2">
    <location>
        <begin position="28"/>
        <end position="48"/>
    </location>
</feature>
<feature type="transmembrane region" description="Helical" evidence="2">
    <location>
        <begin position="72"/>
        <end position="92"/>
    </location>
</feature>